<keyword id="KW-0175">Coiled coil</keyword>
<keyword id="KW-0539">Nucleus</keyword>
<keyword id="KW-0597">Phosphoprotein</keyword>
<keyword id="KW-1185">Reference proteome</keyword>
<keyword id="KW-0690">Ribosome biogenesis</keyword>
<keyword id="KW-0698">rRNA processing</keyword>
<accession>B4G7Y6</accession>
<evidence type="ECO:0000250" key="1"/>
<evidence type="ECO:0000255" key="2">
    <source>
        <dbReference type="HAMAP-Rule" id="MF_03028"/>
    </source>
</evidence>
<evidence type="ECO:0000256" key="3">
    <source>
        <dbReference type="SAM" id="MobiDB-lite"/>
    </source>
</evidence>
<sequence length="631" mass="74496">MRRPKKYEAGEATQYISRRAAIRKLQLSLNDFRRLCILKGVYPREPKHRRRAQKGSSEIKILYHTKDIRFLLHESIVWTLRDYKIFAKKTSRDRAIKDFRNLKRRLALFPEIKLDHIVKERYPTFIDALKDLDDCLTLLFLFSTFPSLHLIPREQSNLCRRLTIEFLHYVIASKSLRKVFISIKGYYFQAEIKGQKVTWIMPHYYPFKPQSRQEVDFKVMSIFVEFYTILQGFTNFRLFHGLNLAYPPQFPSSLLQDNEDTFKDEASFVSDRIAALNFELLRTDKVQEDEEEPDIDMELLEQDGDSKRIIKMKQEAQEVSRLRTLFKGLKFFINREVPREPLVILIRSFGGKVSWDASVFPGATFAENDETITHQIVDRPSLSTQYISRDYIQPQWLFDCVNQRQLLPTNDYFLGETLPPHLSPFVDSKRDSYIPPEEKALHDPSLIETHEQSEEESEEDEAEKEEEEADQELLDAQLQLAYQQETAEYKKYGGPDGVNEDEEDLSEEDDEEDDDEEDVDKEDVDEQTKRKQQEKEKMSVQSGKVHKVNKRQVHKAEVDEHRLQARMVKPRHRNLFRKLIREKQTKEKEEWLLRKKRRNIDADTKEAKKAAKREARKLAAEAAARAAKLVK</sequence>
<reference key="1">
    <citation type="journal article" date="2007" name="Nature">
        <title>Evolution of genes and genomes on the Drosophila phylogeny.</title>
        <authorList>
            <consortium name="Drosophila 12 genomes consortium"/>
        </authorList>
    </citation>
    <scope>NUCLEOTIDE SEQUENCE [LARGE SCALE GENOMIC DNA]</scope>
    <source>
        <strain>MSH-3 / Tucson 14011-0111.49</strain>
    </source>
</reference>
<dbReference type="EMBL" id="CH479180">
    <property type="protein sequence ID" value="EDW28484.1"/>
    <property type="molecule type" value="Genomic_DNA"/>
</dbReference>
<dbReference type="SMR" id="B4G7Y6"/>
<dbReference type="STRING" id="7234.B4G7Y6"/>
<dbReference type="EnsemblMetazoa" id="FBtr0184830">
    <property type="protein sequence ID" value="FBpp0183322"/>
    <property type="gene ID" value="FBgn0156814"/>
</dbReference>
<dbReference type="EnsemblMetazoa" id="XM_002014452.2">
    <property type="protein sequence ID" value="XP_002014488.1"/>
    <property type="gene ID" value="LOC6589884"/>
</dbReference>
<dbReference type="GeneID" id="6589884"/>
<dbReference type="KEGG" id="dpe:6589884"/>
<dbReference type="eggNOG" id="KOG2481">
    <property type="taxonomic scope" value="Eukaryota"/>
</dbReference>
<dbReference type="HOGENOM" id="CLU_019619_0_0_1"/>
<dbReference type="OMA" id="QKVTWIV"/>
<dbReference type="OrthoDB" id="10264910at2759"/>
<dbReference type="PhylomeDB" id="B4G7Y6"/>
<dbReference type="Proteomes" id="UP000008744">
    <property type="component" value="Unassembled WGS sequence"/>
</dbReference>
<dbReference type="GO" id="GO:0005730">
    <property type="term" value="C:nucleolus"/>
    <property type="evidence" value="ECO:0000250"/>
    <property type="project" value="UniProtKB"/>
</dbReference>
<dbReference type="GO" id="GO:0005654">
    <property type="term" value="C:nucleoplasm"/>
    <property type="evidence" value="ECO:0000250"/>
    <property type="project" value="UniProtKB"/>
</dbReference>
<dbReference type="GO" id="GO:0070545">
    <property type="term" value="C:PeBoW complex"/>
    <property type="evidence" value="ECO:0007669"/>
    <property type="project" value="TreeGrafter"/>
</dbReference>
<dbReference type="GO" id="GO:0030687">
    <property type="term" value="C:preribosome, large subunit precursor"/>
    <property type="evidence" value="ECO:0007669"/>
    <property type="project" value="UniProtKB-UniRule"/>
</dbReference>
<dbReference type="GO" id="GO:0043021">
    <property type="term" value="F:ribonucleoprotein complex binding"/>
    <property type="evidence" value="ECO:0007669"/>
    <property type="project" value="UniProtKB-UniRule"/>
</dbReference>
<dbReference type="GO" id="GO:0003723">
    <property type="term" value="F:RNA binding"/>
    <property type="evidence" value="ECO:0007669"/>
    <property type="project" value="TreeGrafter"/>
</dbReference>
<dbReference type="GO" id="GO:0000466">
    <property type="term" value="P:maturation of 5.8S rRNA from tricistronic rRNA transcript (SSU-rRNA, 5.8S rRNA, LSU-rRNA)"/>
    <property type="evidence" value="ECO:0007669"/>
    <property type="project" value="UniProtKB-UniRule"/>
</dbReference>
<dbReference type="GO" id="GO:0000463">
    <property type="term" value="P:maturation of LSU-rRNA from tricistronic rRNA transcript (SSU-rRNA, 5.8S rRNA, LSU-rRNA)"/>
    <property type="evidence" value="ECO:0000250"/>
    <property type="project" value="UniProtKB"/>
</dbReference>
<dbReference type="CDD" id="cd17709">
    <property type="entry name" value="BRCT_pescadillo_like"/>
    <property type="match status" value="1"/>
</dbReference>
<dbReference type="FunFam" id="3.40.50.10190:FF:000002">
    <property type="entry name" value="Pescadillo homolog"/>
    <property type="match status" value="1"/>
</dbReference>
<dbReference type="Gene3D" id="3.40.50.10190">
    <property type="entry name" value="BRCT domain"/>
    <property type="match status" value="1"/>
</dbReference>
<dbReference type="HAMAP" id="MF_03028">
    <property type="entry name" value="Pescadillo"/>
    <property type="match status" value="1"/>
</dbReference>
<dbReference type="InterPro" id="IPR001357">
    <property type="entry name" value="BRCT_dom"/>
</dbReference>
<dbReference type="InterPro" id="IPR036420">
    <property type="entry name" value="BRCT_dom_sf"/>
</dbReference>
<dbReference type="InterPro" id="IPR010613">
    <property type="entry name" value="PES"/>
</dbReference>
<dbReference type="PANTHER" id="PTHR12221">
    <property type="entry name" value="PESCADILLO - RELATED"/>
    <property type="match status" value="1"/>
</dbReference>
<dbReference type="PANTHER" id="PTHR12221:SF6">
    <property type="entry name" value="PESCADILLO HOMOLOG"/>
    <property type="match status" value="1"/>
</dbReference>
<dbReference type="Pfam" id="PF16589">
    <property type="entry name" value="BRCT_2"/>
    <property type="match status" value="1"/>
</dbReference>
<dbReference type="Pfam" id="PF06732">
    <property type="entry name" value="Pescadillo_N"/>
    <property type="match status" value="1"/>
</dbReference>
<dbReference type="SMART" id="SM00292">
    <property type="entry name" value="BRCT"/>
    <property type="match status" value="1"/>
</dbReference>
<dbReference type="SUPFAM" id="SSF52113">
    <property type="entry name" value="BRCT domain"/>
    <property type="match status" value="1"/>
</dbReference>
<dbReference type="PROSITE" id="PS50172">
    <property type="entry name" value="BRCT"/>
    <property type="match status" value="1"/>
</dbReference>
<protein>
    <recommendedName>
        <fullName evidence="2">Pescadillo homolog</fullName>
    </recommendedName>
</protein>
<feature type="chain" id="PRO_0000370457" description="Pescadillo homolog">
    <location>
        <begin position="1"/>
        <end position="631"/>
    </location>
</feature>
<feature type="domain" description="BRCT" evidence="2">
    <location>
        <begin position="321"/>
        <end position="414"/>
    </location>
</feature>
<feature type="region of interest" description="Disordered" evidence="3">
    <location>
        <begin position="428"/>
        <end position="471"/>
    </location>
</feature>
<feature type="region of interest" description="Disordered" evidence="3">
    <location>
        <begin position="489"/>
        <end position="560"/>
    </location>
</feature>
<feature type="coiled-coil region" evidence="2">
    <location>
        <begin position="593"/>
        <end position="629"/>
    </location>
</feature>
<feature type="compositionally biased region" description="Basic and acidic residues" evidence="3">
    <location>
        <begin position="428"/>
        <end position="442"/>
    </location>
</feature>
<feature type="compositionally biased region" description="Acidic residues" evidence="3">
    <location>
        <begin position="453"/>
        <end position="471"/>
    </location>
</feature>
<feature type="compositionally biased region" description="Acidic residues" evidence="3">
    <location>
        <begin position="498"/>
        <end position="525"/>
    </location>
</feature>
<feature type="compositionally biased region" description="Basic and acidic residues" evidence="3">
    <location>
        <begin position="526"/>
        <end position="538"/>
    </location>
</feature>
<feature type="compositionally biased region" description="Basic residues" evidence="3">
    <location>
        <begin position="544"/>
        <end position="553"/>
    </location>
</feature>
<feature type="modified residue" description="Phosphoserine" evidence="1">
    <location>
        <position position="453"/>
    </location>
</feature>
<feature type="modified residue" description="Phosphoserine" evidence="1">
    <location>
        <position position="457"/>
    </location>
</feature>
<comment type="function">
    <text evidence="2">Required for maturation of ribosomal RNAs and formation of the large ribosomal subunit.</text>
</comment>
<comment type="subcellular location">
    <subcellularLocation>
        <location evidence="2">Nucleus</location>
        <location evidence="2">Nucleolus</location>
    </subcellularLocation>
    <subcellularLocation>
        <location evidence="2">Nucleus</location>
        <location evidence="2">Nucleoplasm</location>
    </subcellularLocation>
</comment>
<comment type="similarity">
    <text evidence="2">Belongs to the pescadillo family.</text>
</comment>
<organism>
    <name type="scientific">Drosophila persimilis</name>
    <name type="common">Fruit fly</name>
    <dbReference type="NCBI Taxonomy" id="7234"/>
    <lineage>
        <taxon>Eukaryota</taxon>
        <taxon>Metazoa</taxon>
        <taxon>Ecdysozoa</taxon>
        <taxon>Arthropoda</taxon>
        <taxon>Hexapoda</taxon>
        <taxon>Insecta</taxon>
        <taxon>Pterygota</taxon>
        <taxon>Neoptera</taxon>
        <taxon>Endopterygota</taxon>
        <taxon>Diptera</taxon>
        <taxon>Brachycera</taxon>
        <taxon>Muscomorpha</taxon>
        <taxon>Ephydroidea</taxon>
        <taxon>Drosophilidae</taxon>
        <taxon>Drosophila</taxon>
        <taxon>Sophophora</taxon>
    </lineage>
</organism>
<proteinExistence type="inferred from homology"/>
<gene>
    <name type="ORF">GL19215</name>
</gene>
<name>PESC_DROPE</name>